<comment type="catalytic activity">
    <reaction>
        <text>Inactivates bleomycin B2 (a cytotoxic glycometallopeptide) by hydrolysis of a carboxyamide bond of beta-aminoalanine, but also shows general aminopeptidase activity. The specificity varies somewhat with source, but amino acid arylamides of Met, Leu and Ala are preferred.</text>
        <dbReference type="EC" id="3.4.22.40"/>
    </reaction>
</comment>
<comment type="similarity">
    <text evidence="2 3">Belongs to the peptidase C1 family.</text>
</comment>
<gene>
    <name type="primary">pepC</name>
    <name type="ordered locus">lmo2338</name>
</gene>
<protein>
    <recommendedName>
        <fullName>Aminopeptidase C</fullName>
        <ecNumber>3.4.22.40</ecNumber>
    </recommendedName>
    <alternativeName>
        <fullName>Bleomycin hydrolase</fullName>
    </alternativeName>
</protein>
<dbReference type="EC" id="3.4.22.40"/>
<dbReference type="EMBL" id="AF067409">
    <property type="protein sequence ID" value="AAC17920.1"/>
    <property type="molecule type" value="Genomic_DNA"/>
</dbReference>
<dbReference type="EMBL" id="AL591983">
    <property type="protein sequence ID" value="CAD00416.1"/>
    <property type="molecule type" value="Genomic_DNA"/>
</dbReference>
<dbReference type="PIR" id="AB1367">
    <property type="entry name" value="AB1367"/>
</dbReference>
<dbReference type="RefSeq" id="NP_465861.1">
    <property type="nucleotide sequence ID" value="NC_003210.1"/>
</dbReference>
<dbReference type="RefSeq" id="WP_003731859.1">
    <property type="nucleotide sequence ID" value="NZ_CP149495.1"/>
</dbReference>
<dbReference type="SMR" id="O69192"/>
<dbReference type="STRING" id="169963.gene:17595029"/>
<dbReference type="MEROPS" id="C01.086"/>
<dbReference type="PaxDb" id="169963-lmo2338"/>
<dbReference type="EnsemblBacteria" id="CAD00416">
    <property type="protein sequence ID" value="CAD00416"/>
    <property type="gene ID" value="CAD00416"/>
</dbReference>
<dbReference type="GeneID" id="984466"/>
<dbReference type="KEGG" id="lmo:lmo2338"/>
<dbReference type="PATRIC" id="fig|169963.11.peg.2395"/>
<dbReference type="eggNOG" id="COG3579">
    <property type="taxonomic scope" value="Bacteria"/>
</dbReference>
<dbReference type="HOGENOM" id="CLU_038600_0_1_9"/>
<dbReference type="OrthoDB" id="1111399at2"/>
<dbReference type="PhylomeDB" id="O69192"/>
<dbReference type="BioCyc" id="LMON169963:LMO2338-MONOMER"/>
<dbReference type="Proteomes" id="UP000000817">
    <property type="component" value="Chromosome"/>
</dbReference>
<dbReference type="GO" id="GO:0005737">
    <property type="term" value="C:cytoplasm"/>
    <property type="evidence" value="ECO:0000318"/>
    <property type="project" value="GO_Central"/>
</dbReference>
<dbReference type="GO" id="GO:0004177">
    <property type="term" value="F:aminopeptidase activity"/>
    <property type="evidence" value="ECO:0000318"/>
    <property type="project" value="GO_Central"/>
</dbReference>
<dbReference type="GO" id="GO:0070005">
    <property type="term" value="F:cysteine-type aminopeptidase activity"/>
    <property type="evidence" value="ECO:0007669"/>
    <property type="project" value="InterPro"/>
</dbReference>
<dbReference type="GO" id="GO:0004197">
    <property type="term" value="F:cysteine-type endopeptidase activity"/>
    <property type="evidence" value="ECO:0007669"/>
    <property type="project" value="UniProtKB-EC"/>
</dbReference>
<dbReference type="GO" id="GO:0008234">
    <property type="term" value="F:cysteine-type peptidase activity"/>
    <property type="evidence" value="ECO:0000318"/>
    <property type="project" value="GO_Central"/>
</dbReference>
<dbReference type="GO" id="GO:0043418">
    <property type="term" value="P:homocysteine catabolic process"/>
    <property type="evidence" value="ECO:0000318"/>
    <property type="project" value="GO_Central"/>
</dbReference>
<dbReference type="GO" id="GO:0006508">
    <property type="term" value="P:proteolysis"/>
    <property type="evidence" value="ECO:0007669"/>
    <property type="project" value="UniProtKB-KW"/>
</dbReference>
<dbReference type="GO" id="GO:0009636">
    <property type="term" value="P:response to toxic substance"/>
    <property type="evidence" value="ECO:0000318"/>
    <property type="project" value="GO_Central"/>
</dbReference>
<dbReference type="CDD" id="cd00585">
    <property type="entry name" value="Peptidase_C1B"/>
    <property type="match status" value="1"/>
</dbReference>
<dbReference type="FunFam" id="3.90.70.10:FF:000091">
    <property type="entry name" value="Aminopeptidase C"/>
    <property type="match status" value="1"/>
</dbReference>
<dbReference type="Gene3D" id="3.90.70.10">
    <property type="entry name" value="Cysteine proteinases"/>
    <property type="match status" value="1"/>
</dbReference>
<dbReference type="InterPro" id="IPR038765">
    <property type="entry name" value="Papain-like_cys_pep_sf"/>
</dbReference>
<dbReference type="InterPro" id="IPR000169">
    <property type="entry name" value="Pept_cys_AS"/>
</dbReference>
<dbReference type="InterPro" id="IPR025660">
    <property type="entry name" value="Pept_his_AS"/>
</dbReference>
<dbReference type="InterPro" id="IPR004134">
    <property type="entry name" value="Peptidase_C1B"/>
</dbReference>
<dbReference type="PANTHER" id="PTHR10363">
    <property type="entry name" value="BLEOMYCIN HYDROLASE"/>
    <property type="match status" value="1"/>
</dbReference>
<dbReference type="PANTHER" id="PTHR10363:SF2">
    <property type="entry name" value="BLEOMYCIN HYDROLASE"/>
    <property type="match status" value="1"/>
</dbReference>
<dbReference type="Pfam" id="PF03051">
    <property type="entry name" value="Peptidase_C1_2"/>
    <property type="match status" value="1"/>
</dbReference>
<dbReference type="PIRSF" id="PIRSF005700">
    <property type="entry name" value="PepC"/>
    <property type="match status" value="1"/>
</dbReference>
<dbReference type="SUPFAM" id="SSF54001">
    <property type="entry name" value="Cysteine proteinases"/>
    <property type="match status" value="1"/>
</dbReference>
<dbReference type="PROSITE" id="PS00139">
    <property type="entry name" value="THIOL_PROTEASE_CYS"/>
    <property type="match status" value="1"/>
</dbReference>
<dbReference type="PROSITE" id="PS00639">
    <property type="entry name" value="THIOL_PROTEASE_HIS"/>
    <property type="match status" value="1"/>
</dbReference>
<proteinExistence type="inferred from homology"/>
<accession>O69192</accession>
<name>PEPC_LISMO</name>
<feature type="chain" id="PRO_0000050595" description="Aminopeptidase C">
    <location>
        <begin position="1"/>
        <end position="441"/>
    </location>
</feature>
<feature type="active site" evidence="1">
    <location>
        <position position="70"/>
    </location>
</feature>
<feature type="active site" evidence="1">
    <location>
        <position position="361"/>
    </location>
</feature>
<feature type="active site" evidence="1">
    <location>
        <position position="382"/>
    </location>
</feature>
<sequence length="441" mass="50605">MQTELTFEQLENFSRKWRENPDKLVFQASIMKNGIKAATENPTSKVSIQPVFSHEVATDKVSNQQQSGRCWMFAALNTFRHKLNGTLGLKDFELSQNYTNFWDKLEKANYFLENIIETASEDEDSRLVSWLLDTPQQDGGQWDMLVSIIEKYGVVPKSAMPETFQSGKSADLNHLLNERLRTDAVILRKAFTEKKDTAGLKEEMLAEIYQLLVMTLGEPPKVFDFEYRNKDNEFKQELQITPKDFYERYVDMDLKNYIPLINAPTKDKPFNQAFTVDYLGNIVNGTPIKYLNVEMDVLKKAATDQIKDGETVWFGCDVGQLSEKTTGIMDTDIFLLNQTFGFKTAMTKAERLDYKHSMLTHAMVLTGVNVANGEVNRWKVENSWGEKIGNNGYFVASDAWMDEFTFQVVVHKKYLSKELIEAFNQEPIALKPWDPMGSLAL</sequence>
<keyword id="KW-0031">Aminopeptidase</keyword>
<keyword id="KW-0378">Hydrolase</keyword>
<keyword id="KW-0645">Protease</keyword>
<keyword id="KW-1185">Reference proteome</keyword>
<keyword id="KW-0788">Thiol protease</keyword>
<organism>
    <name type="scientific">Listeria monocytogenes serovar 1/2a (strain ATCC BAA-679 / EGD-e)</name>
    <dbReference type="NCBI Taxonomy" id="169963"/>
    <lineage>
        <taxon>Bacteria</taxon>
        <taxon>Bacillati</taxon>
        <taxon>Bacillota</taxon>
        <taxon>Bacilli</taxon>
        <taxon>Bacillales</taxon>
        <taxon>Listeriaceae</taxon>
        <taxon>Listeria</taxon>
    </lineage>
</organism>
<evidence type="ECO:0000250" key="1"/>
<evidence type="ECO:0000255" key="2">
    <source>
        <dbReference type="PROSITE-ProRule" id="PRU10088"/>
    </source>
</evidence>
<evidence type="ECO:0000255" key="3">
    <source>
        <dbReference type="PROSITE-ProRule" id="PRU10089"/>
    </source>
</evidence>
<reference key="1">
    <citation type="journal article" date="2000" name="Antonie Van Leeuwenhoek">
        <title>Characterization by molecular cloning and sequencing of the gene encoding an aminopeptidase from Listeria monocytogenes.</title>
        <authorList>
            <person name="Winters D.K."/>
            <person name="Ivey D.M."/>
            <person name="Maloney T.P."/>
            <person name="Johnson M.G."/>
        </authorList>
    </citation>
    <scope>NUCLEOTIDE SEQUENCE [GENOMIC DNA]</scope>
    <source>
        <strain>V7</strain>
    </source>
</reference>
<reference key="2">
    <citation type="journal article" date="2001" name="Science">
        <title>Comparative genomics of Listeria species.</title>
        <authorList>
            <person name="Glaser P."/>
            <person name="Frangeul L."/>
            <person name="Buchrieser C."/>
            <person name="Rusniok C."/>
            <person name="Amend A."/>
            <person name="Baquero F."/>
            <person name="Berche P."/>
            <person name="Bloecker H."/>
            <person name="Brandt P."/>
            <person name="Chakraborty T."/>
            <person name="Charbit A."/>
            <person name="Chetouani F."/>
            <person name="Couve E."/>
            <person name="de Daruvar A."/>
            <person name="Dehoux P."/>
            <person name="Domann E."/>
            <person name="Dominguez-Bernal G."/>
            <person name="Duchaud E."/>
            <person name="Durant L."/>
            <person name="Dussurget O."/>
            <person name="Entian K.-D."/>
            <person name="Fsihi H."/>
            <person name="Garcia-del Portillo F."/>
            <person name="Garrido P."/>
            <person name="Gautier L."/>
            <person name="Goebel W."/>
            <person name="Gomez-Lopez N."/>
            <person name="Hain T."/>
            <person name="Hauf J."/>
            <person name="Jackson D."/>
            <person name="Jones L.-M."/>
            <person name="Kaerst U."/>
            <person name="Kreft J."/>
            <person name="Kuhn M."/>
            <person name="Kunst F."/>
            <person name="Kurapkat G."/>
            <person name="Madueno E."/>
            <person name="Maitournam A."/>
            <person name="Mata Vicente J."/>
            <person name="Ng E."/>
            <person name="Nedjari H."/>
            <person name="Nordsiek G."/>
            <person name="Novella S."/>
            <person name="de Pablos B."/>
            <person name="Perez-Diaz J.-C."/>
            <person name="Purcell R."/>
            <person name="Remmel B."/>
            <person name="Rose M."/>
            <person name="Schlueter T."/>
            <person name="Simoes N."/>
            <person name="Tierrez A."/>
            <person name="Vazquez-Boland J.-A."/>
            <person name="Voss H."/>
            <person name="Wehland J."/>
            <person name="Cossart P."/>
        </authorList>
    </citation>
    <scope>NUCLEOTIDE SEQUENCE [LARGE SCALE GENOMIC DNA]</scope>
    <source>
        <strain>ATCC BAA-679 / EGD-e</strain>
    </source>
</reference>